<reference key="1">
    <citation type="journal article" date="2001" name="DNA Res.">
        <title>Complete genomic sequence of the filamentous nitrogen-fixing cyanobacterium Anabaena sp. strain PCC 7120.</title>
        <authorList>
            <person name="Kaneko T."/>
            <person name="Nakamura Y."/>
            <person name="Wolk C.P."/>
            <person name="Kuritz T."/>
            <person name="Sasamoto S."/>
            <person name="Watanabe A."/>
            <person name="Iriguchi M."/>
            <person name="Ishikawa A."/>
            <person name="Kawashima K."/>
            <person name="Kimura T."/>
            <person name="Kishida Y."/>
            <person name="Kohara M."/>
            <person name="Matsumoto M."/>
            <person name="Matsuno A."/>
            <person name="Muraki A."/>
            <person name="Nakazaki N."/>
            <person name="Shimpo S."/>
            <person name="Sugimoto M."/>
            <person name="Takazawa M."/>
            <person name="Yamada M."/>
            <person name="Yasuda M."/>
            <person name="Tabata S."/>
        </authorList>
    </citation>
    <scope>NUCLEOTIDE SEQUENCE [LARGE SCALE GENOMIC DNA]</scope>
    <source>
        <strain>PCC 7120 / SAG 25.82 / UTEX 2576</strain>
    </source>
</reference>
<keyword id="KW-1185">Reference proteome</keyword>
<keyword id="KW-0694">RNA-binding</keyword>
<evidence type="ECO:0000250" key="1"/>
<evidence type="ECO:0000255" key="2">
    <source>
        <dbReference type="PROSITE-ProRule" id="PRU00176"/>
    </source>
</evidence>
<evidence type="ECO:0000256" key="3">
    <source>
        <dbReference type="SAM" id="MobiDB-lite"/>
    </source>
</evidence>
<proteinExistence type="inferred from homology"/>
<name>RBPD_NOSS1</name>
<organism>
    <name type="scientific">Nostoc sp. (strain PCC 7120 / SAG 25.82 / UTEX 2576)</name>
    <dbReference type="NCBI Taxonomy" id="103690"/>
    <lineage>
        <taxon>Bacteria</taxon>
        <taxon>Bacillati</taxon>
        <taxon>Cyanobacteriota</taxon>
        <taxon>Cyanophyceae</taxon>
        <taxon>Nostocales</taxon>
        <taxon>Nostocaceae</taxon>
        <taxon>Nostoc</taxon>
    </lineage>
</organism>
<gene>
    <name type="primary">rbpD</name>
    <name type="ordered locus">asl4022</name>
</gene>
<protein>
    <recommendedName>
        <fullName>Putative RNA-binding protein RbpD</fullName>
    </recommendedName>
</protein>
<feature type="initiator methionine" description="Removed" evidence="1">
    <location>
        <position position="1"/>
    </location>
</feature>
<feature type="chain" id="PRO_0000262940" description="Putative RNA-binding protein RbpD">
    <location>
        <begin position="2"/>
        <end position="94"/>
    </location>
</feature>
<feature type="domain" description="RRM" evidence="2">
    <location>
        <begin position="2"/>
        <end position="79"/>
    </location>
</feature>
<feature type="region of interest" description="Disordered" evidence="3">
    <location>
        <begin position="73"/>
        <end position="94"/>
    </location>
</feature>
<feature type="compositionally biased region" description="Basic and acidic residues" evidence="3">
    <location>
        <begin position="78"/>
        <end position="94"/>
    </location>
</feature>
<accession>Q44556</accession>
<dbReference type="EMBL" id="BA000019">
    <property type="protein sequence ID" value="BAB75721.1"/>
    <property type="molecule type" value="Genomic_DNA"/>
</dbReference>
<dbReference type="PIR" id="AG2308">
    <property type="entry name" value="AG2308"/>
</dbReference>
<dbReference type="PIR" id="S58674">
    <property type="entry name" value="S58674"/>
</dbReference>
<dbReference type="RefSeq" id="WP_010998162.1">
    <property type="nucleotide sequence ID" value="NZ_RSCN01000023.1"/>
</dbReference>
<dbReference type="SMR" id="Q44556"/>
<dbReference type="STRING" id="103690.gene:10496065"/>
<dbReference type="KEGG" id="ana:asl4022"/>
<dbReference type="eggNOG" id="COG0724">
    <property type="taxonomic scope" value="Bacteria"/>
</dbReference>
<dbReference type="OrthoDB" id="465979at2"/>
<dbReference type="Proteomes" id="UP000002483">
    <property type="component" value="Chromosome"/>
</dbReference>
<dbReference type="GO" id="GO:0003723">
    <property type="term" value="F:RNA binding"/>
    <property type="evidence" value="ECO:0007669"/>
    <property type="project" value="UniProtKB-KW"/>
</dbReference>
<dbReference type="FunFam" id="3.30.70.330:FF:001284">
    <property type="entry name" value="RNA-binding protein"/>
    <property type="match status" value="1"/>
</dbReference>
<dbReference type="Gene3D" id="3.30.70.330">
    <property type="match status" value="1"/>
</dbReference>
<dbReference type="InterPro" id="IPR012677">
    <property type="entry name" value="Nucleotide-bd_a/b_plait_sf"/>
</dbReference>
<dbReference type="InterPro" id="IPR035979">
    <property type="entry name" value="RBD_domain_sf"/>
</dbReference>
<dbReference type="InterPro" id="IPR000504">
    <property type="entry name" value="RRM_dom"/>
</dbReference>
<dbReference type="InterPro" id="IPR052462">
    <property type="entry name" value="SLIRP/GR-RBP-like"/>
</dbReference>
<dbReference type="PANTHER" id="PTHR48027">
    <property type="entry name" value="HETEROGENEOUS NUCLEAR RIBONUCLEOPROTEIN 87F-RELATED"/>
    <property type="match status" value="1"/>
</dbReference>
<dbReference type="Pfam" id="PF00076">
    <property type="entry name" value="RRM_1"/>
    <property type="match status" value="1"/>
</dbReference>
<dbReference type="SMART" id="SM00360">
    <property type="entry name" value="RRM"/>
    <property type="match status" value="1"/>
</dbReference>
<dbReference type="SUPFAM" id="SSF54928">
    <property type="entry name" value="RNA-binding domain, RBD"/>
    <property type="match status" value="1"/>
</dbReference>
<dbReference type="PROSITE" id="PS50102">
    <property type="entry name" value="RRM"/>
    <property type="match status" value="1"/>
</dbReference>
<sequence>MTIYVGNLSYRATEADLKAVFADYGEVKRVVLPTDRETGRMRGFAFVEMNEDAQEDAAITELDGAEWMGRQLRVNKAKPREDDRRGSWGKKQDY</sequence>